<keyword id="KW-0028">Amino-acid biosynthesis</keyword>
<keyword id="KW-0220">Diaminopimelate biosynthesis</keyword>
<keyword id="KW-0378">Hydrolase</keyword>
<keyword id="KW-0457">Lysine biosynthesis</keyword>
<accession>C1CH24</accession>
<organism>
    <name type="scientific">Streptococcus pneumoniae (strain JJA)</name>
    <dbReference type="NCBI Taxonomy" id="488222"/>
    <lineage>
        <taxon>Bacteria</taxon>
        <taxon>Bacillati</taxon>
        <taxon>Bacillota</taxon>
        <taxon>Bacilli</taxon>
        <taxon>Lactobacillales</taxon>
        <taxon>Streptococcaceae</taxon>
        <taxon>Streptococcus</taxon>
    </lineage>
</organism>
<dbReference type="EC" id="3.5.1.47" evidence="1"/>
<dbReference type="EMBL" id="CP000919">
    <property type="protein sequence ID" value="ACO19813.1"/>
    <property type="molecule type" value="Genomic_DNA"/>
</dbReference>
<dbReference type="RefSeq" id="WP_000885102.1">
    <property type="nucleotide sequence ID" value="NC_012466.1"/>
</dbReference>
<dbReference type="SMR" id="C1CH24"/>
<dbReference type="KEGG" id="sjj:SPJ_2116"/>
<dbReference type="HOGENOM" id="CLU_023257_0_1_9"/>
<dbReference type="UniPathway" id="UPA00034">
    <property type="reaction ID" value="UER00024"/>
</dbReference>
<dbReference type="Proteomes" id="UP000002206">
    <property type="component" value="Chromosome"/>
</dbReference>
<dbReference type="GO" id="GO:0050118">
    <property type="term" value="F:N-acetyldiaminopimelate deacetylase activity"/>
    <property type="evidence" value="ECO:0007669"/>
    <property type="project" value="UniProtKB-UniRule"/>
</dbReference>
<dbReference type="GO" id="GO:0019877">
    <property type="term" value="P:diaminopimelate biosynthetic process"/>
    <property type="evidence" value="ECO:0007669"/>
    <property type="project" value="UniProtKB-UniRule"/>
</dbReference>
<dbReference type="GO" id="GO:0009089">
    <property type="term" value="P:lysine biosynthetic process via diaminopimelate"/>
    <property type="evidence" value="ECO:0007669"/>
    <property type="project" value="UniProtKB-UniRule"/>
</dbReference>
<dbReference type="CDD" id="cd05670">
    <property type="entry name" value="M20_Acy1_YkuR-like"/>
    <property type="match status" value="1"/>
</dbReference>
<dbReference type="FunFam" id="3.30.70.360:FF:000001">
    <property type="entry name" value="N-acetyldiaminopimelate deacetylase"/>
    <property type="match status" value="1"/>
</dbReference>
<dbReference type="Gene3D" id="3.30.70.360">
    <property type="match status" value="1"/>
</dbReference>
<dbReference type="Gene3D" id="3.40.630.10">
    <property type="entry name" value="Zn peptidases"/>
    <property type="match status" value="1"/>
</dbReference>
<dbReference type="HAMAP" id="MF_01692">
    <property type="entry name" value="DapEL"/>
    <property type="match status" value="1"/>
</dbReference>
<dbReference type="InterPro" id="IPR023905">
    <property type="entry name" value="AcetylDAP_deacetylase"/>
</dbReference>
<dbReference type="InterPro" id="IPR017439">
    <property type="entry name" value="Amidohydrolase"/>
</dbReference>
<dbReference type="InterPro" id="IPR036264">
    <property type="entry name" value="Bact_exopeptidase_dim_dom"/>
</dbReference>
<dbReference type="InterPro" id="IPR002933">
    <property type="entry name" value="Peptidase_M20"/>
</dbReference>
<dbReference type="InterPro" id="IPR011650">
    <property type="entry name" value="Peptidase_M20_dimer"/>
</dbReference>
<dbReference type="NCBIfam" id="TIGR01891">
    <property type="entry name" value="amidohydrolases"/>
    <property type="match status" value="1"/>
</dbReference>
<dbReference type="PANTHER" id="PTHR11014:SF98">
    <property type="entry name" value="N-ACETYLDIAMINOPIMELATE DEACETYLASE"/>
    <property type="match status" value="1"/>
</dbReference>
<dbReference type="PANTHER" id="PTHR11014">
    <property type="entry name" value="PEPTIDASE M20 FAMILY MEMBER"/>
    <property type="match status" value="1"/>
</dbReference>
<dbReference type="Pfam" id="PF07687">
    <property type="entry name" value="M20_dimer"/>
    <property type="match status" value="1"/>
</dbReference>
<dbReference type="Pfam" id="PF01546">
    <property type="entry name" value="Peptidase_M20"/>
    <property type="match status" value="1"/>
</dbReference>
<dbReference type="PIRSF" id="PIRSF005962">
    <property type="entry name" value="Pept_M20D_amidohydro"/>
    <property type="match status" value="1"/>
</dbReference>
<dbReference type="SUPFAM" id="SSF55031">
    <property type="entry name" value="Bacterial exopeptidase dimerisation domain"/>
    <property type="match status" value="1"/>
</dbReference>
<dbReference type="SUPFAM" id="SSF53187">
    <property type="entry name" value="Zn-dependent exopeptidases"/>
    <property type="match status" value="1"/>
</dbReference>
<sequence length="376" mass="41680">MLDLIQTRRDLHQIPEIGLEEFKTQAYLLDVIEKLTTGKDFVQIRTWRTGILVYLQGSQPERTIGWRTDIDGLPIVEQTGLPFASQHQGRMHACGHDFHMTIALGCLERALEEQPKNNLLFLFQPAEENEAGGMLMYEDDAFGDWLPDQFYGLHVRPDLKVGQIATNTHTLFAGTCEVKIRFKGKGGHAAFPHEANDALVAASYFVTQVQSVVSRNVNPIEGAVVTFGVFQAGTTNNVITDTAFLHGTIRALTQDMSLLVQKRVKTVAEGVAAAFDMEVEVELKQGGYLPVENNPALARELMDFFDEKDGIELIDIEPAMTGEDFGYLLSKVDGVMFWLGIDSPYALHHPQMSPKEEVLAIGVAAVSSFLKKKAAE</sequence>
<reference key="1">
    <citation type="journal article" date="2010" name="Genome Biol.">
        <title>Structure and dynamics of the pan-genome of Streptococcus pneumoniae and closely related species.</title>
        <authorList>
            <person name="Donati C."/>
            <person name="Hiller N.L."/>
            <person name="Tettelin H."/>
            <person name="Muzzi A."/>
            <person name="Croucher N.J."/>
            <person name="Angiuoli S.V."/>
            <person name="Oggioni M."/>
            <person name="Dunning Hotopp J.C."/>
            <person name="Hu F.Z."/>
            <person name="Riley D.R."/>
            <person name="Covacci A."/>
            <person name="Mitchell T.J."/>
            <person name="Bentley S.D."/>
            <person name="Kilian M."/>
            <person name="Ehrlich G.D."/>
            <person name="Rappuoli R."/>
            <person name="Moxon E.R."/>
            <person name="Masignani V."/>
        </authorList>
    </citation>
    <scope>NUCLEOTIDE SEQUENCE [LARGE SCALE GENOMIC DNA]</scope>
    <source>
        <strain>JJA</strain>
    </source>
</reference>
<gene>
    <name type="ordered locus">SPJ_2116</name>
</gene>
<proteinExistence type="inferred from homology"/>
<feature type="chain" id="PRO_1000187461" description="N-acetyldiaminopimelate deacetylase">
    <location>
        <begin position="1"/>
        <end position="376"/>
    </location>
</feature>
<feature type="active site" evidence="1">
    <location>
        <position position="69"/>
    </location>
</feature>
<feature type="active site" description="Proton acceptor" evidence="1">
    <location>
        <position position="128"/>
    </location>
</feature>
<name>DAPEL_STRZJ</name>
<protein>
    <recommendedName>
        <fullName evidence="1">N-acetyldiaminopimelate deacetylase</fullName>
        <ecNumber evidence="1">3.5.1.47</ecNumber>
    </recommendedName>
</protein>
<evidence type="ECO:0000255" key="1">
    <source>
        <dbReference type="HAMAP-Rule" id="MF_01692"/>
    </source>
</evidence>
<comment type="function">
    <text evidence="1">Catalyzes the conversion of N-acetyl-diaminopimelate to diaminopimelate and acetate.</text>
</comment>
<comment type="catalytic activity">
    <reaction evidence="1">
        <text>N-acetyl-(2S,6S)-2,6-diaminopimelate + H2O = (2S,6S)-2,6-diaminopimelate + acetate</text>
        <dbReference type="Rhea" id="RHEA:20405"/>
        <dbReference type="ChEBI" id="CHEBI:15377"/>
        <dbReference type="ChEBI" id="CHEBI:30089"/>
        <dbReference type="ChEBI" id="CHEBI:57609"/>
        <dbReference type="ChEBI" id="CHEBI:58767"/>
        <dbReference type="EC" id="3.5.1.47"/>
    </reaction>
</comment>
<comment type="pathway">
    <text evidence="1">Amino-acid biosynthesis; L-lysine biosynthesis via DAP pathway; LL-2,6-diaminopimelate from (S)-tetrahydrodipicolinate (acetylase route): step 3/3.</text>
</comment>
<comment type="similarity">
    <text evidence="1">Belongs to the peptidase M20A family. N-acetyldiaminopimelate deacetylase subfamily.</text>
</comment>